<proteinExistence type="inferred from homology"/>
<reference key="1">
    <citation type="journal article" date="2003" name="Proc. Natl. Acad. Sci. U.S.A.">
        <title>The genome sequence of Clostridium tetani, the causative agent of tetanus disease.</title>
        <authorList>
            <person name="Brueggemann H."/>
            <person name="Baeumer S."/>
            <person name="Fricke W.F."/>
            <person name="Wiezer A."/>
            <person name="Liesegang H."/>
            <person name="Decker I."/>
            <person name="Herzberg C."/>
            <person name="Martinez-Arias R."/>
            <person name="Merkl R."/>
            <person name="Henne A."/>
            <person name="Gottschalk G."/>
        </authorList>
    </citation>
    <scope>NUCLEOTIDE SEQUENCE [LARGE SCALE GENOMIC DNA]</scope>
    <source>
        <strain>Massachusetts / E88</strain>
    </source>
</reference>
<dbReference type="EMBL" id="AE015927">
    <property type="protein sequence ID" value="AAO36522.1"/>
    <property type="molecule type" value="Genomic_DNA"/>
</dbReference>
<dbReference type="RefSeq" id="WP_011100180.1">
    <property type="nucleotide sequence ID" value="NC_004557.1"/>
</dbReference>
<dbReference type="SMR" id="Q892S2"/>
<dbReference type="STRING" id="212717.CTC_02018"/>
<dbReference type="GeneID" id="24254143"/>
<dbReference type="KEGG" id="ctc:CTC_02018"/>
<dbReference type="HOGENOM" id="CLU_038009_1_0_9"/>
<dbReference type="OrthoDB" id="9805918at2"/>
<dbReference type="Proteomes" id="UP000001412">
    <property type="component" value="Chromosome"/>
</dbReference>
<dbReference type="GO" id="GO:0005829">
    <property type="term" value="C:cytosol"/>
    <property type="evidence" value="ECO:0007669"/>
    <property type="project" value="TreeGrafter"/>
</dbReference>
<dbReference type="GO" id="GO:0005886">
    <property type="term" value="C:plasma membrane"/>
    <property type="evidence" value="ECO:0007669"/>
    <property type="project" value="UniProtKB-SubCell"/>
</dbReference>
<dbReference type="GO" id="GO:0005525">
    <property type="term" value="F:GTP binding"/>
    <property type="evidence" value="ECO:0007669"/>
    <property type="project" value="UniProtKB-UniRule"/>
</dbReference>
<dbReference type="GO" id="GO:0003924">
    <property type="term" value="F:GTPase activity"/>
    <property type="evidence" value="ECO:0007669"/>
    <property type="project" value="UniProtKB-UniRule"/>
</dbReference>
<dbReference type="GO" id="GO:0043024">
    <property type="term" value="F:ribosomal small subunit binding"/>
    <property type="evidence" value="ECO:0007669"/>
    <property type="project" value="TreeGrafter"/>
</dbReference>
<dbReference type="GO" id="GO:0070181">
    <property type="term" value="F:small ribosomal subunit rRNA binding"/>
    <property type="evidence" value="ECO:0007669"/>
    <property type="project" value="UniProtKB-UniRule"/>
</dbReference>
<dbReference type="GO" id="GO:0000028">
    <property type="term" value="P:ribosomal small subunit assembly"/>
    <property type="evidence" value="ECO:0007669"/>
    <property type="project" value="TreeGrafter"/>
</dbReference>
<dbReference type="CDD" id="cd04163">
    <property type="entry name" value="Era"/>
    <property type="match status" value="1"/>
</dbReference>
<dbReference type="CDD" id="cd22534">
    <property type="entry name" value="KH-II_Era"/>
    <property type="match status" value="1"/>
</dbReference>
<dbReference type="FunFam" id="3.30.300.20:FF:000003">
    <property type="entry name" value="GTPase Era"/>
    <property type="match status" value="1"/>
</dbReference>
<dbReference type="FunFam" id="3.40.50.300:FF:000094">
    <property type="entry name" value="GTPase Era"/>
    <property type="match status" value="1"/>
</dbReference>
<dbReference type="Gene3D" id="3.30.300.20">
    <property type="match status" value="1"/>
</dbReference>
<dbReference type="Gene3D" id="3.40.50.300">
    <property type="entry name" value="P-loop containing nucleotide triphosphate hydrolases"/>
    <property type="match status" value="1"/>
</dbReference>
<dbReference type="HAMAP" id="MF_00367">
    <property type="entry name" value="GTPase_Era"/>
    <property type="match status" value="1"/>
</dbReference>
<dbReference type="InterPro" id="IPR030388">
    <property type="entry name" value="G_ERA_dom"/>
</dbReference>
<dbReference type="InterPro" id="IPR006073">
    <property type="entry name" value="GTP-bd"/>
</dbReference>
<dbReference type="InterPro" id="IPR005662">
    <property type="entry name" value="GTPase_Era-like"/>
</dbReference>
<dbReference type="InterPro" id="IPR015946">
    <property type="entry name" value="KH_dom-like_a/b"/>
</dbReference>
<dbReference type="InterPro" id="IPR004044">
    <property type="entry name" value="KH_dom_type_2"/>
</dbReference>
<dbReference type="InterPro" id="IPR009019">
    <property type="entry name" value="KH_sf_prok-type"/>
</dbReference>
<dbReference type="InterPro" id="IPR027417">
    <property type="entry name" value="P-loop_NTPase"/>
</dbReference>
<dbReference type="InterPro" id="IPR005225">
    <property type="entry name" value="Small_GTP-bd"/>
</dbReference>
<dbReference type="NCBIfam" id="TIGR00436">
    <property type="entry name" value="era"/>
    <property type="match status" value="1"/>
</dbReference>
<dbReference type="NCBIfam" id="NF000908">
    <property type="entry name" value="PRK00089.1"/>
    <property type="match status" value="1"/>
</dbReference>
<dbReference type="NCBIfam" id="TIGR00231">
    <property type="entry name" value="small_GTP"/>
    <property type="match status" value="1"/>
</dbReference>
<dbReference type="PANTHER" id="PTHR42698">
    <property type="entry name" value="GTPASE ERA"/>
    <property type="match status" value="1"/>
</dbReference>
<dbReference type="PANTHER" id="PTHR42698:SF1">
    <property type="entry name" value="GTPASE ERA, MITOCHONDRIAL"/>
    <property type="match status" value="1"/>
</dbReference>
<dbReference type="Pfam" id="PF07650">
    <property type="entry name" value="KH_2"/>
    <property type="match status" value="1"/>
</dbReference>
<dbReference type="Pfam" id="PF01926">
    <property type="entry name" value="MMR_HSR1"/>
    <property type="match status" value="1"/>
</dbReference>
<dbReference type="SUPFAM" id="SSF52540">
    <property type="entry name" value="P-loop containing nucleoside triphosphate hydrolases"/>
    <property type="match status" value="1"/>
</dbReference>
<dbReference type="SUPFAM" id="SSF54814">
    <property type="entry name" value="Prokaryotic type KH domain (KH-domain type II)"/>
    <property type="match status" value="1"/>
</dbReference>
<dbReference type="PROSITE" id="PS51713">
    <property type="entry name" value="G_ERA"/>
    <property type="match status" value="1"/>
</dbReference>
<dbReference type="PROSITE" id="PS50823">
    <property type="entry name" value="KH_TYPE_2"/>
    <property type="match status" value="1"/>
</dbReference>
<comment type="function">
    <text evidence="1">An essential GTPase that binds both GDP and GTP, with rapid nucleotide exchange. Plays a role in 16S rRNA processing and 30S ribosomal subunit biogenesis and possibly also in cell cycle regulation and energy metabolism.</text>
</comment>
<comment type="subunit">
    <text evidence="1">Monomer.</text>
</comment>
<comment type="subcellular location">
    <subcellularLocation>
        <location>Cytoplasm</location>
    </subcellularLocation>
    <subcellularLocation>
        <location evidence="1">Cell membrane</location>
        <topology evidence="1">Peripheral membrane protein</topology>
    </subcellularLocation>
</comment>
<comment type="similarity">
    <text evidence="1 2">Belongs to the TRAFAC class TrmE-Era-EngA-EngB-Septin-like GTPase superfamily. Era GTPase family.</text>
</comment>
<sequence length="295" mass="34057">MFKSGFITVIGRPNVGKSTLLNNIMKEKLSIVSHKPQTTRNNIQTILTQEDCQIVFVDTPGMHKPKHKLGEYMVKVAEEALKGVDIVLFMTTPEGQLGRGDVYILEQLKRIKQPVFLIVNKIDENDQGKVAETLKNYHDAYPFFKEIIPISASKDKNVDTLLELMKKYLPEGPKYYPEDMITDQQERFIVAEIIREKALRLLSEEVPHGIAVEMMTMKKNEKGNYEINATMLCERDSHKGIIIGKNGSMLKKISQYARQDIEKFLQSKVSLKVWVKVKKEWRDDNRILKELGYRQ</sequence>
<protein>
    <recommendedName>
        <fullName evidence="1">GTPase Era</fullName>
    </recommendedName>
</protein>
<organism>
    <name type="scientific">Clostridium tetani (strain Massachusetts / E88)</name>
    <dbReference type="NCBI Taxonomy" id="212717"/>
    <lineage>
        <taxon>Bacteria</taxon>
        <taxon>Bacillati</taxon>
        <taxon>Bacillota</taxon>
        <taxon>Clostridia</taxon>
        <taxon>Eubacteriales</taxon>
        <taxon>Clostridiaceae</taxon>
        <taxon>Clostridium</taxon>
    </lineage>
</organism>
<accession>Q892S2</accession>
<name>ERA_CLOTE</name>
<evidence type="ECO:0000255" key="1">
    <source>
        <dbReference type="HAMAP-Rule" id="MF_00367"/>
    </source>
</evidence>
<evidence type="ECO:0000255" key="2">
    <source>
        <dbReference type="PROSITE-ProRule" id="PRU01050"/>
    </source>
</evidence>
<gene>
    <name evidence="1" type="primary">era</name>
    <name type="ordered locus">CTC_02018</name>
</gene>
<keyword id="KW-1003">Cell membrane</keyword>
<keyword id="KW-0963">Cytoplasm</keyword>
<keyword id="KW-0342">GTP-binding</keyword>
<keyword id="KW-0472">Membrane</keyword>
<keyword id="KW-0547">Nucleotide-binding</keyword>
<keyword id="KW-1185">Reference proteome</keyword>
<keyword id="KW-0690">Ribosome biogenesis</keyword>
<keyword id="KW-0694">RNA-binding</keyword>
<keyword id="KW-0699">rRNA-binding</keyword>
<feature type="chain" id="PRO_1000079678" description="GTPase Era">
    <location>
        <begin position="1"/>
        <end position="295"/>
    </location>
</feature>
<feature type="domain" description="Era-type G" evidence="2">
    <location>
        <begin position="3"/>
        <end position="171"/>
    </location>
</feature>
<feature type="domain" description="KH type-2" evidence="1">
    <location>
        <begin position="202"/>
        <end position="279"/>
    </location>
</feature>
<feature type="region of interest" description="G1" evidence="2">
    <location>
        <begin position="11"/>
        <end position="18"/>
    </location>
</feature>
<feature type="region of interest" description="G2" evidence="2">
    <location>
        <begin position="37"/>
        <end position="41"/>
    </location>
</feature>
<feature type="region of interest" description="G3" evidence="2">
    <location>
        <begin position="58"/>
        <end position="61"/>
    </location>
</feature>
<feature type="region of interest" description="G4" evidence="2">
    <location>
        <begin position="120"/>
        <end position="123"/>
    </location>
</feature>
<feature type="region of interest" description="G5" evidence="2">
    <location>
        <begin position="150"/>
        <end position="152"/>
    </location>
</feature>
<feature type="binding site" evidence="1">
    <location>
        <begin position="11"/>
        <end position="18"/>
    </location>
    <ligand>
        <name>GTP</name>
        <dbReference type="ChEBI" id="CHEBI:37565"/>
    </ligand>
</feature>
<feature type="binding site" evidence="1">
    <location>
        <begin position="58"/>
        <end position="62"/>
    </location>
    <ligand>
        <name>GTP</name>
        <dbReference type="ChEBI" id="CHEBI:37565"/>
    </ligand>
</feature>
<feature type="binding site" evidence="1">
    <location>
        <begin position="120"/>
        <end position="123"/>
    </location>
    <ligand>
        <name>GTP</name>
        <dbReference type="ChEBI" id="CHEBI:37565"/>
    </ligand>
</feature>